<proteinExistence type="inferred from homology"/>
<organism>
    <name type="scientific">Methanoculleus marisnigri (strain ATCC 35101 / DSM 1498 / JR1)</name>
    <dbReference type="NCBI Taxonomy" id="368407"/>
    <lineage>
        <taxon>Archaea</taxon>
        <taxon>Methanobacteriati</taxon>
        <taxon>Methanobacteriota</taxon>
        <taxon>Stenosarchaea group</taxon>
        <taxon>Methanomicrobia</taxon>
        <taxon>Methanomicrobiales</taxon>
        <taxon>Methanomicrobiaceae</taxon>
        <taxon>Methanoculleus</taxon>
    </lineage>
</organism>
<keyword id="KW-0963">Cytoplasm</keyword>
<keyword id="KW-0385">Hypusine</keyword>
<keyword id="KW-0396">Initiation factor</keyword>
<keyword id="KW-0648">Protein biosynthesis</keyword>
<sequence length="125" mass="13752">MKEQTEVGKLKEGRYVVVEDEPCRIVSIATSKPGKHGAAKSRIDCIGIFDGVKRSIVQPVSAKTYVPIVERKMAQVISIAGTTVQLMDVKDFDMFELNVTEEQVAGLEPGKEIPYISSLGKKKLE</sequence>
<accession>A3CU49</accession>
<gene>
    <name type="primary">eIF5A</name>
    <name type="ordered locus">Memar_0966</name>
</gene>
<feature type="chain" id="PRO_1000007912" description="Translation initiation factor 5A">
    <location>
        <begin position="1"/>
        <end position="125"/>
    </location>
</feature>
<feature type="modified residue" description="Hypusine" evidence="1">
    <location>
        <position position="35"/>
    </location>
</feature>
<evidence type="ECO:0000255" key="1">
    <source>
        <dbReference type="HAMAP-Rule" id="MF_00085"/>
    </source>
</evidence>
<comment type="function">
    <text evidence="1">Functions by promoting the formation of the first peptide bond.</text>
</comment>
<comment type="subcellular location">
    <subcellularLocation>
        <location evidence="1">Cytoplasm</location>
    </subcellularLocation>
</comment>
<comment type="similarity">
    <text evidence="1">Belongs to the eIF-5A family.</text>
</comment>
<name>IF5A_METMJ</name>
<reference key="1">
    <citation type="journal article" date="2009" name="Stand. Genomic Sci.">
        <title>Complete genome sequence of Methanoculleus marisnigri Romesser et al. 1981 type strain JR1.</title>
        <authorList>
            <person name="Anderson I.J."/>
            <person name="Sieprawska-Lupa M."/>
            <person name="Lapidus A."/>
            <person name="Nolan M."/>
            <person name="Copeland A."/>
            <person name="Glavina Del Rio T."/>
            <person name="Tice H."/>
            <person name="Dalin E."/>
            <person name="Barry K."/>
            <person name="Saunders E."/>
            <person name="Han C."/>
            <person name="Brettin T."/>
            <person name="Detter J.C."/>
            <person name="Bruce D."/>
            <person name="Mikhailova N."/>
            <person name="Pitluck S."/>
            <person name="Hauser L."/>
            <person name="Land M."/>
            <person name="Lucas S."/>
            <person name="Richardson P."/>
            <person name="Whitman W.B."/>
            <person name="Kyrpides N.C."/>
        </authorList>
    </citation>
    <scope>NUCLEOTIDE SEQUENCE [LARGE SCALE GENOMIC DNA]</scope>
    <source>
        <strain>ATCC 35101 / DSM 1498 / JR1</strain>
    </source>
</reference>
<protein>
    <recommendedName>
        <fullName evidence="1">Translation initiation factor 5A</fullName>
    </recommendedName>
    <alternativeName>
        <fullName evidence="1">Hypusine-containing protein</fullName>
    </alternativeName>
    <alternativeName>
        <fullName evidence="1">eIF-5A</fullName>
    </alternativeName>
</protein>
<dbReference type="EMBL" id="CP000562">
    <property type="protein sequence ID" value="ABN56899.1"/>
    <property type="molecule type" value="Genomic_DNA"/>
</dbReference>
<dbReference type="RefSeq" id="WP_011843810.1">
    <property type="nucleotide sequence ID" value="NC_009051.1"/>
</dbReference>
<dbReference type="SMR" id="A3CU49"/>
<dbReference type="STRING" id="368407.Memar_0966"/>
<dbReference type="GeneID" id="4848074"/>
<dbReference type="KEGG" id="mem:Memar_0966"/>
<dbReference type="eggNOG" id="arCOG04277">
    <property type="taxonomic scope" value="Archaea"/>
</dbReference>
<dbReference type="HOGENOM" id="CLU_102600_3_0_2"/>
<dbReference type="OrthoDB" id="23689at2157"/>
<dbReference type="Proteomes" id="UP000002146">
    <property type="component" value="Chromosome"/>
</dbReference>
<dbReference type="GO" id="GO:0005737">
    <property type="term" value="C:cytoplasm"/>
    <property type="evidence" value="ECO:0007669"/>
    <property type="project" value="UniProtKB-SubCell"/>
</dbReference>
<dbReference type="GO" id="GO:0043022">
    <property type="term" value="F:ribosome binding"/>
    <property type="evidence" value="ECO:0007669"/>
    <property type="project" value="InterPro"/>
</dbReference>
<dbReference type="GO" id="GO:0003723">
    <property type="term" value="F:RNA binding"/>
    <property type="evidence" value="ECO:0007669"/>
    <property type="project" value="InterPro"/>
</dbReference>
<dbReference type="GO" id="GO:0003746">
    <property type="term" value="F:translation elongation factor activity"/>
    <property type="evidence" value="ECO:0007669"/>
    <property type="project" value="InterPro"/>
</dbReference>
<dbReference type="GO" id="GO:0003743">
    <property type="term" value="F:translation initiation factor activity"/>
    <property type="evidence" value="ECO:0007669"/>
    <property type="project" value="UniProtKB-UniRule"/>
</dbReference>
<dbReference type="GO" id="GO:0045901">
    <property type="term" value="P:positive regulation of translational elongation"/>
    <property type="evidence" value="ECO:0007669"/>
    <property type="project" value="InterPro"/>
</dbReference>
<dbReference type="GO" id="GO:0045905">
    <property type="term" value="P:positive regulation of translational termination"/>
    <property type="evidence" value="ECO:0007669"/>
    <property type="project" value="InterPro"/>
</dbReference>
<dbReference type="CDD" id="cd04467">
    <property type="entry name" value="S1_aIF5A"/>
    <property type="match status" value="1"/>
</dbReference>
<dbReference type="FunFam" id="2.30.30.30:FF:000038">
    <property type="entry name" value="Translation initiation factor 5A"/>
    <property type="match status" value="1"/>
</dbReference>
<dbReference type="Gene3D" id="2.30.30.30">
    <property type="match status" value="1"/>
</dbReference>
<dbReference type="Gene3D" id="2.40.50.140">
    <property type="entry name" value="Nucleic acid-binding proteins"/>
    <property type="match status" value="1"/>
</dbReference>
<dbReference type="HAMAP" id="MF_00085">
    <property type="entry name" value="eIF_5A"/>
    <property type="match status" value="1"/>
</dbReference>
<dbReference type="InterPro" id="IPR001884">
    <property type="entry name" value="IF5A-like"/>
</dbReference>
<dbReference type="InterPro" id="IPR048670">
    <property type="entry name" value="IF5A-like_N"/>
</dbReference>
<dbReference type="InterPro" id="IPR012340">
    <property type="entry name" value="NA-bd_OB-fold"/>
</dbReference>
<dbReference type="InterPro" id="IPR014722">
    <property type="entry name" value="Rib_uL2_dom2"/>
</dbReference>
<dbReference type="InterPro" id="IPR019769">
    <property type="entry name" value="Trans_elong_IF5A_hypusine_site"/>
</dbReference>
<dbReference type="InterPro" id="IPR022847">
    <property type="entry name" value="Transl_elong_IF5A_arc"/>
</dbReference>
<dbReference type="InterPro" id="IPR020189">
    <property type="entry name" value="Transl_elong_IF5A_C"/>
</dbReference>
<dbReference type="InterPro" id="IPR008991">
    <property type="entry name" value="Translation_prot_SH3-like_sf"/>
</dbReference>
<dbReference type="NCBIfam" id="TIGR00037">
    <property type="entry name" value="eIF_5A"/>
    <property type="match status" value="1"/>
</dbReference>
<dbReference type="NCBIfam" id="NF003076">
    <property type="entry name" value="PRK03999.1"/>
    <property type="match status" value="1"/>
</dbReference>
<dbReference type="PANTHER" id="PTHR11673">
    <property type="entry name" value="TRANSLATION INITIATION FACTOR 5A FAMILY MEMBER"/>
    <property type="match status" value="1"/>
</dbReference>
<dbReference type="Pfam" id="PF21485">
    <property type="entry name" value="IF5A-like_N"/>
    <property type="match status" value="1"/>
</dbReference>
<dbReference type="PIRSF" id="PIRSF003025">
    <property type="entry name" value="eIF5A"/>
    <property type="match status" value="1"/>
</dbReference>
<dbReference type="SMART" id="SM01376">
    <property type="entry name" value="eIF-5a"/>
    <property type="match status" value="1"/>
</dbReference>
<dbReference type="SUPFAM" id="SSF50249">
    <property type="entry name" value="Nucleic acid-binding proteins"/>
    <property type="match status" value="1"/>
</dbReference>
<dbReference type="SUPFAM" id="SSF50104">
    <property type="entry name" value="Translation proteins SH3-like domain"/>
    <property type="match status" value="1"/>
</dbReference>
<dbReference type="PROSITE" id="PS00302">
    <property type="entry name" value="IF5A_HYPUSINE"/>
    <property type="match status" value="1"/>
</dbReference>